<name>RL23_HISS1</name>
<proteinExistence type="inferred from homology"/>
<protein>
    <recommendedName>
        <fullName evidence="1">Large ribosomal subunit protein uL23</fullName>
    </recommendedName>
    <alternativeName>
        <fullName evidence="2">50S ribosomal protein L23</fullName>
    </alternativeName>
</protein>
<evidence type="ECO:0000255" key="1">
    <source>
        <dbReference type="HAMAP-Rule" id="MF_01369"/>
    </source>
</evidence>
<evidence type="ECO:0000305" key="2"/>
<organism>
    <name type="scientific">Histophilus somni (strain 129Pt)</name>
    <name type="common">Haemophilus somnus</name>
    <dbReference type="NCBI Taxonomy" id="205914"/>
    <lineage>
        <taxon>Bacteria</taxon>
        <taxon>Pseudomonadati</taxon>
        <taxon>Pseudomonadota</taxon>
        <taxon>Gammaproteobacteria</taxon>
        <taxon>Pasteurellales</taxon>
        <taxon>Pasteurellaceae</taxon>
        <taxon>Histophilus</taxon>
    </lineage>
</organism>
<gene>
    <name evidence="1" type="primary">rplW</name>
    <name type="ordered locus">HS_0061</name>
</gene>
<comment type="function">
    <text evidence="1">One of the early assembly proteins it binds 23S rRNA. One of the proteins that surrounds the polypeptide exit tunnel on the outside of the ribosome. Forms the main docking site for trigger factor binding to the ribosome.</text>
</comment>
<comment type="subunit">
    <text evidence="1">Part of the 50S ribosomal subunit. Contacts protein L29, and trigger factor when it is bound to the ribosome.</text>
</comment>
<comment type="similarity">
    <text evidence="1">Belongs to the universal ribosomal protein uL23 family.</text>
</comment>
<sequence length="101" mass="11300">MIQQERLLKVLRAPHVSEKATNNTEKSNTIVFKVALDANKVEIANAVEQLFEVKVDSVRTVVVKGKTKRRGAKMGQRSDWKKAYVTLQEGQSLDFVEGAAE</sequence>
<feature type="chain" id="PRO_0000272758" description="Large ribosomal subunit protein uL23">
    <location>
        <begin position="1"/>
        <end position="101"/>
    </location>
</feature>
<dbReference type="EMBL" id="CP000436">
    <property type="protein sequence ID" value="ABI24342.1"/>
    <property type="molecule type" value="Genomic_DNA"/>
</dbReference>
<dbReference type="SMR" id="Q0I161"/>
<dbReference type="KEGG" id="hso:HS_0061"/>
<dbReference type="eggNOG" id="COG0089">
    <property type="taxonomic scope" value="Bacteria"/>
</dbReference>
<dbReference type="HOGENOM" id="CLU_037562_3_1_6"/>
<dbReference type="GO" id="GO:1990904">
    <property type="term" value="C:ribonucleoprotein complex"/>
    <property type="evidence" value="ECO:0007669"/>
    <property type="project" value="UniProtKB-KW"/>
</dbReference>
<dbReference type="GO" id="GO:0005840">
    <property type="term" value="C:ribosome"/>
    <property type="evidence" value="ECO:0007669"/>
    <property type="project" value="UniProtKB-KW"/>
</dbReference>
<dbReference type="GO" id="GO:0019843">
    <property type="term" value="F:rRNA binding"/>
    <property type="evidence" value="ECO:0007669"/>
    <property type="project" value="UniProtKB-UniRule"/>
</dbReference>
<dbReference type="GO" id="GO:0003735">
    <property type="term" value="F:structural constituent of ribosome"/>
    <property type="evidence" value="ECO:0007669"/>
    <property type="project" value="InterPro"/>
</dbReference>
<dbReference type="GO" id="GO:0006412">
    <property type="term" value="P:translation"/>
    <property type="evidence" value="ECO:0007669"/>
    <property type="project" value="UniProtKB-UniRule"/>
</dbReference>
<dbReference type="FunFam" id="3.30.70.330:FF:000001">
    <property type="entry name" value="50S ribosomal protein L23"/>
    <property type="match status" value="1"/>
</dbReference>
<dbReference type="Gene3D" id="3.30.70.330">
    <property type="match status" value="1"/>
</dbReference>
<dbReference type="HAMAP" id="MF_01369_B">
    <property type="entry name" value="Ribosomal_uL23_B"/>
    <property type="match status" value="1"/>
</dbReference>
<dbReference type="InterPro" id="IPR012677">
    <property type="entry name" value="Nucleotide-bd_a/b_plait_sf"/>
</dbReference>
<dbReference type="InterPro" id="IPR013025">
    <property type="entry name" value="Ribosomal_uL23-like"/>
</dbReference>
<dbReference type="InterPro" id="IPR012678">
    <property type="entry name" value="Ribosomal_uL23/eL15/eS24_sf"/>
</dbReference>
<dbReference type="InterPro" id="IPR001014">
    <property type="entry name" value="Ribosomal_uL23_CS"/>
</dbReference>
<dbReference type="NCBIfam" id="NF004358">
    <property type="entry name" value="PRK05738.1-1"/>
    <property type="match status" value="1"/>
</dbReference>
<dbReference type="NCBIfam" id="NF004359">
    <property type="entry name" value="PRK05738.1-3"/>
    <property type="match status" value="1"/>
</dbReference>
<dbReference type="NCBIfam" id="NF004363">
    <property type="entry name" value="PRK05738.2-4"/>
    <property type="match status" value="1"/>
</dbReference>
<dbReference type="NCBIfam" id="NF004366">
    <property type="entry name" value="PRK05738.3-2"/>
    <property type="match status" value="1"/>
</dbReference>
<dbReference type="PANTHER" id="PTHR11620">
    <property type="entry name" value="60S RIBOSOMAL PROTEIN L23A"/>
    <property type="match status" value="1"/>
</dbReference>
<dbReference type="Pfam" id="PF00276">
    <property type="entry name" value="Ribosomal_L23"/>
    <property type="match status" value="1"/>
</dbReference>
<dbReference type="SUPFAM" id="SSF54189">
    <property type="entry name" value="Ribosomal proteins S24e, L23 and L15e"/>
    <property type="match status" value="1"/>
</dbReference>
<dbReference type="PROSITE" id="PS00050">
    <property type="entry name" value="RIBOSOMAL_L23"/>
    <property type="match status" value="1"/>
</dbReference>
<reference key="1">
    <citation type="journal article" date="2007" name="J. Bacteriol.">
        <title>Complete genome sequence of Haemophilus somnus (Histophilus somni) strain 129Pt and comparison to Haemophilus ducreyi 35000HP and Haemophilus influenzae Rd.</title>
        <authorList>
            <person name="Challacombe J.F."/>
            <person name="Duncan A.J."/>
            <person name="Brettin T.S."/>
            <person name="Bruce D."/>
            <person name="Chertkov O."/>
            <person name="Detter J.C."/>
            <person name="Han C.S."/>
            <person name="Misra M."/>
            <person name="Richardson P."/>
            <person name="Tapia R."/>
            <person name="Thayer N."/>
            <person name="Xie G."/>
            <person name="Inzana T.J."/>
        </authorList>
    </citation>
    <scope>NUCLEOTIDE SEQUENCE [LARGE SCALE GENOMIC DNA]</scope>
    <source>
        <strain>129Pt</strain>
    </source>
</reference>
<accession>Q0I161</accession>
<keyword id="KW-0687">Ribonucleoprotein</keyword>
<keyword id="KW-0689">Ribosomal protein</keyword>
<keyword id="KW-0694">RNA-binding</keyword>
<keyword id="KW-0699">rRNA-binding</keyword>